<name>KAD6_ORYSJ</name>
<evidence type="ECO:0000250" key="1">
    <source>
        <dbReference type="UniProtKB" id="P69441"/>
    </source>
</evidence>
<evidence type="ECO:0000255" key="2"/>
<evidence type="ECO:0000305" key="3"/>
<dbReference type="EC" id="2.7.4.3"/>
<dbReference type="EMBL" id="AL606619">
    <property type="protein sequence ID" value="CAE02833.1"/>
    <property type="molecule type" value="Genomic_DNA"/>
</dbReference>
<dbReference type="EMBL" id="AP008210">
    <property type="protein sequence ID" value="BAF16131.2"/>
    <property type="status" value="ALT_SEQ"/>
    <property type="molecule type" value="Genomic_DNA"/>
</dbReference>
<dbReference type="EMBL" id="AP014960">
    <property type="status" value="NOT_ANNOTATED_CDS"/>
    <property type="molecule type" value="Genomic_DNA"/>
</dbReference>
<dbReference type="RefSeq" id="XP_015633564.1">
    <property type="nucleotide sequence ID" value="XM_015778078.1"/>
</dbReference>
<dbReference type="SMR" id="Q7XR47"/>
<dbReference type="FunCoup" id="Q7XR47">
    <property type="interactions" value="249"/>
</dbReference>
<dbReference type="STRING" id="39947.Q7XR47"/>
<dbReference type="PaxDb" id="39947-Q7XR47"/>
<dbReference type="KEGG" id="dosa:Os04g0671100"/>
<dbReference type="eggNOG" id="KOG3078">
    <property type="taxonomic scope" value="Eukaryota"/>
</dbReference>
<dbReference type="InParanoid" id="Q7XR47"/>
<dbReference type="OrthoDB" id="439792at2759"/>
<dbReference type="Proteomes" id="UP000000763">
    <property type="component" value="Chromosome 4"/>
</dbReference>
<dbReference type="Proteomes" id="UP000059680">
    <property type="component" value="Chromosome 4"/>
</dbReference>
<dbReference type="GO" id="GO:0009507">
    <property type="term" value="C:chloroplast"/>
    <property type="evidence" value="ECO:0007669"/>
    <property type="project" value="UniProtKB-SubCell"/>
</dbReference>
<dbReference type="GO" id="GO:0005737">
    <property type="term" value="C:cytoplasm"/>
    <property type="evidence" value="ECO:0000318"/>
    <property type="project" value="GO_Central"/>
</dbReference>
<dbReference type="GO" id="GO:0005739">
    <property type="term" value="C:mitochondrion"/>
    <property type="evidence" value="ECO:0000318"/>
    <property type="project" value="GO_Central"/>
</dbReference>
<dbReference type="GO" id="GO:0004017">
    <property type="term" value="F:adenylate kinase activity"/>
    <property type="evidence" value="ECO:0000318"/>
    <property type="project" value="GO_Central"/>
</dbReference>
<dbReference type="GO" id="GO:0005524">
    <property type="term" value="F:ATP binding"/>
    <property type="evidence" value="ECO:0007669"/>
    <property type="project" value="UniProtKB-KW"/>
</dbReference>
<dbReference type="CDD" id="cd01428">
    <property type="entry name" value="ADK"/>
    <property type="match status" value="1"/>
</dbReference>
<dbReference type="Gene3D" id="3.40.50.300">
    <property type="entry name" value="P-loop containing nucleotide triphosphate hydrolases"/>
    <property type="match status" value="1"/>
</dbReference>
<dbReference type="HAMAP" id="MF_00235">
    <property type="entry name" value="Adenylate_kinase_Adk"/>
    <property type="match status" value="1"/>
</dbReference>
<dbReference type="InterPro" id="IPR006259">
    <property type="entry name" value="Adenyl_kin_sub"/>
</dbReference>
<dbReference type="InterPro" id="IPR000850">
    <property type="entry name" value="Adenylat/UMP-CMP_kin"/>
</dbReference>
<dbReference type="InterPro" id="IPR033690">
    <property type="entry name" value="Adenylat_kinase_CS"/>
</dbReference>
<dbReference type="InterPro" id="IPR027417">
    <property type="entry name" value="P-loop_NTPase"/>
</dbReference>
<dbReference type="NCBIfam" id="TIGR01351">
    <property type="entry name" value="adk"/>
    <property type="match status" value="1"/>
</dbReference>
<dbReference type="PANTHER" id="PTHR23359">
    <property type="entry name" value="NUCLEOTIDE KINASE"/>
    <property type="match status" value="1"/>
</dbReference>
<dbReference type="Pfam" id="PF00406">
    <property type="entry name" value="ADK"/>
    <property type="match status" value="1"/>
</dbReference>
<dbReference type="PRINTS" id="PR00094">
    <property type="entry name" value="ADENYLTKNASE"/>
</dbReference>
<dbReference type="SUPFAM" id="SSF52540">
    <property type="entry name" value="P-loop containing nucleoside triphosphate hydrolases"/>
    <property type="match status" value="1"/>
</dbReference>
<dbReference type="PROSITE" id="PS00113">
    <property type="entry name" value="ADENYLATE_KINASE"/>
    <property type="match status" value="1"/>
</dbReference>
<feature type="transit peptide" description="Chloroplast" evidence="2">
    <location>
        <begin position="1"/>
        <end position="33"/>
    </location>
</feature>
<feature type="chain" id="PRO_0000430120" description="Probable adenylate kinase 6, chloroplastic">
    <location>
        <begin position="34"/>
        <end position="285"/>
    </location>
</feature>
<feature type="region of interest" description="NMP" evidence="1">
    <location>
        <begin position="83"/>
        <end position="112"/>
    </location>
</feature>
<feature type="region of interest" description="LID" evidence="1">
    <location>
        <begin position="176"/>
        <end position="224"/>
    </location>
</feature>
<feature type="binding site" evidence="1">
    <location>
        <begin position="63"/>
        <end position="68"/>
    </location>
    <ligand>
        <name>ATP</name>
        <dbReference type="ChEBI" id="CHEBI:30616"/>
    </ligand>
</feature>
<feature type="binding site" evidence="1">
    <location>
        <position position="84"/>
    </location>
    <ligand>
        <name>AMP</name>
        <dbReference type="ChEBI" id="CHEBI:456215"/>
    </ligand>
</feature>
<feature type="binding site" evidence="1">
    <location>
        <position position="89"/>
    </location>
    <ligand>
        <name>AMP</name>
        <dbReference type="ChEBI" id="CHEBI:456215"/>
    </ligand>
</feature>
<feature type="binding site" evidence="1">
    <location>
        <begin position="110"/>
        <end position="112"/>
    </location>
    <ligand>
        <name>AMP</name>
        <dbReference type="ChEBI" id="CHEBI:456215"/>
    </ligand>
</feature>
<feature type="binding site" evidence="1">
    <location>
        <begin position="140"/>
        <end position="143"/>
    </location>
    <ligand>
        <name>AMP</name>
        <dbReference type="ChEBI" id="CHEBI:456215"/>
    </ligand>
</feature>
<feature type="binding site" evidence="1">
    <location>
        <position position="147"/>
    </location>
    <ligand>
        <name>AMP</name>
        <dbReference type="ChEBI" id="CHEBI:456215"/>
    </ligand>
</feature>
<feature type="binding site" evidence="1">
    <location>
        <position position="177"/>
    </location>
    <ligand>
        <name>ATP</name>
        <dbReference type="ChEBI" id="CHEBI:30616"/>
    </ligand>
</feature>
<feature type="binding site" evidence="1">
    <location>
        <begin position="186"/>
        <end position="187"/>
    </location>
    <ligand>
        <name>ATP</name>
        <dbReference type="ChEBI" id="CHEBI:30616"/>
    </ligand>
</feature>
<feature type="binding site" evidence="1">
    <location>
        <position position="221"/>
    </location>
    <ligand>
        <name>AMP</name>
        <dbReference type="ChEBI" id="CHEBI:456215"/>
    </ligand>
</feature>
<feature type="binding site" evidence="1">
    <location>
        <position position="232"/>
    </location>
    <ligand>
        <name>AMP</name>
        <dbReference type="ChEBI" id="CHEBI:456215"/>
    </ligand>
</feature>
<reference key="1">
    <citation type="journal article" date="2002" name="Nature">
        <title>Sequence and analysis of rice chromosome 4.</title>
        <authorList>
            <person name="Feng Q."/>
            <person name="Zhang Y."/>
            <person name="Hao P."/>
            <person name="Wang S."/>
            <person name="Fu G."/>
            <person name="Huang Y."/>
            <person name="Li Y."/>
            <person name="Zhu J."/>
            <person name="Liu Y."/>
            <person name="Hu X."/>
            <person name="Jia P."/>
            <person name="Zhang Y."/>
            <person name="Zhao Q."/>
            <person name="Ying K."/>
            <person name="Yu S."/>
            <person name="Tang Y."/>
            <person name="Weng Q."/>
            <person name="Zhang L."/>
            <person name="Lu Y."/>
            <person name="Mu J."/>
            <person name="Lu Y."/>
            <person name="Zhang L.S."/>
            <person name="Yu Z."/>
            <person name="Fan D."/>
            <person name="Liu X."/>
            <person name="Lu T."/>
            <person name="Li C."/>
            <person name="Wu Y."/>
            <person name="Sun T."/>
            <person name="Lei H."/>
            <person name="Li T."/>
            <person name="Hu H."/>
            <person name="Guan J."/>
            <person name="Wu M."/>
            <person name="Zhang R."/>
            <person name="Zhou B."/>
            <person name="Chen Z."/>
            <person name="Chen L."/>
            <person name="Jin Z."/>
            <person name="Wang R."/>
            <person name="Yin H."/>
            <person name="Cai Z."/>
            <person name="Ren S."/>
            <person name="Lv G."/>
            <person name="Gu W."/>
            <person name="Zhu G."/>
            <person name="Tu Y."/>
            <person name="Jia J."/>
            <person name="Zhang Y."/>
            <person name="Chen J."/>
            <person name="Kang H."/>
            <person name="Chen X."/>
            <person name="Shao C."/>
            <person name="Sun Y."/>
            <person name="Hu Q."/>
            <person name="Zhang X."/>
            <person name="Zhang W."/>
            <person name="Wang L."/>
            <person name="Ding C."/>
            <person name="Sheng H."/>
            <person name="Gu J."/>
            <person name="Chen S."/>
            <person name="Ni L."/>
            <person name="Zhu F."/>
            <person name="Chen W."/>
            <person name="Lan L."/>
            <person name="Lai Y."/>
            <person name="Cheng Z."/>
            <person name="Gu M."/>
            <person name="Jiang J."/>
            <person name="Li J."/>
            <person name="Hong G."/>
            <person name="Xue Y."/>
            <person name="Han B."/>
        </authorList>
    </citation>
    <scope>NUCLEOTIDE SEQUENCE [LARGE SCALE GENOMIC DNA]</scope>
    <source>
        <strain>cv. Nipponbare</strain>
    </source>
</reference>
<reference key="2">
    <citation type="journal article" date="2005" name="Nature">
        <title>The map-based sequence of the rice genome.</title>
        <authorList>
            <consortium name="International rice genome sequencing project (IRGSP)"/>
        </authorList>
    </citation>
    <scope>NUCLEOTIDE SEQUENCE [LARGE SCALE GENOMIC DNA]</scope>
    <source>
        <strain>cv. Nipponbare</strain>
    </source>
</reference>
<reference key="3">
    <citation type="journal article" date="2008" name="Nucleic Acids Res.">
        <title>The rice annotation project database (RAP-DB): 2008 update.</title>
        <authorList>
            <consortium name="The rice annotation project (RAP)"/>
        </authorList>
    </citation>
    <scope>GENOME REANNOTATION</scope>
    <source>
        <strain>cv. Nipponbare</strain>
    </source>
</reference>
<reference key="4">
    <citation type="journal article" date="2013" name="Rice">
        <title>Improvement of the Oryza sativa Nipponbare reference genome using next generation sequence and optical map data.</title>
        <authorList>
            <person name="Kawahara Y."/>
            <person name="de la Bastide M."/>
            <person name="Hamilton J.P."/>
            <person name="Kanamori H."/>
            <person name="McCombie W.R."/>
            <person name="Ouyang S."/>
            <person name="Schwartz D.C."/>
            <person name="Tanaka T."/>
            <person name="Wu J."/>
            <person name="Zhou S."/>
            <person name="Childs K.L."/>
            <person name="Davidson R.M."/>
            <person name="Lin H."/>
            <person name="Quesada-Ocampo L."/>
            <person name="Vaillancourt B."/>
            <person name="Sakai H."/>
            <person name="Lee S.S."/>
            <person name="Kim J."/>
            <person name="Numa H."/>
            <person name="Itoh T."/>
            <person name="Buell C.R."/>
            <person name="Matsumoto T."/>
        </authorList>
    </citation>
    <scope>GENOME REANNOTATION</scope>
    <source>
        <strain>cv. Nipponbare</strain>
    </source>
</reference>
<organism>
    <name type="scientific">Oryza sativa subsp. japonica</name>
    <name type="common">Rice</name>
    <dbReference type="NCBI Taxonomy" id="39947"/>
    <lineage>
        <taxon>Eukaryota</taxon>
        <taxon>Viridiplantae</taxon>
        <taxon>Streptophyta</taxon>
        <taxon>Embryophyta</taxon>
        <taxon>Tracheophyta</taxon>
        <taxon>Spermatophyta</taxon>
        <taxon>Magnoliopsida</taxon>
        <taxon>Liliopsida</taxon>
        <taxon>Poales</taxon>
        <taxon>Poaceae</taxon>
        <taxon>BOP clade</taxon>
        <taxon>Oryzoideae</taxon>
        <taxon>Oryzeae</taxon>
        <taxon>Oryzinae</taxon>
        <taxon>Oryza</taxon>
        <taxon>Oryza sativa</taxon>
    </lineage>
</organism>
<keyword id="KW-0067">ATP-binding</keyword>
<keyword id="KW-0150">Chloroplast</keyword>
<keyword id="KW-0418">Kinase</keyword>
<keyword id="KW-0547">Nucleotide-binding</keyword>
<keyword id="KW-0934">Plastid</keyword>
<keyword id="KW-1185">Reference proteome</keyword>
<keyword id="KW-0808">Transferase</keyword>
<keyword id="KW-0809">Transit peptide</keyword>
<proteinExistence type="inferred from homology"/>
<sequence length="285" mass="31063">MAAISRAIRACAAAGSRRSMASSAKEVAAAGARAAAAVARRGREREREEDGRRVQWVFLGCPGVGKGTYASRLSQMLRVPHIATGDLVRDALASPGPFSEQLAEIVNNGKLVSDEIIINLLSKRLEEGAEKGELGFILDGFPRTIRQAEILEGVTDIDLVINLKLREEALLAKCLGRRMCSQCGGNFNVASIDMEGENGGPRMYMPPLLPPPQCESKLITRPDDTEEVVKERLRVYHDLCEPVEDFYRARGKLLEFNLPGGIPESWPKLLQALNLDPGNERSAAA</sequence>
<comment type="function">
    <text evidence="1">Catalyzes the reversible transfer of the terminal phosphate group between ATP and AMP. Plays an important role in cellular energy homeostasis and in adenine nucleotide metabolism.</text>
</comment>
<comment type="catalytic activity">
    <reaction evidence="1">
        <text>AMP + ATP = 2 ADP</text>
        <dbReference type="Rhea" id="RHEA:12973"/>
        <dbReference type="ChEBI" id="CHEBI:30616"/>
        <dbReference type="ChEBI" id="CHEBI:456215"/>
        <dbReference type="ChEBI" id="CHEBI:456216"/>
        <dbReference type="EC" id="2.7.4.3"/>
    </reaction>
</comment>
<comment type="subcellular location">
    <subcellularLocation>
        <location evidence="3">Plastid</location>
        <location evidence="3">Chloroplast</location>
    </subcellularLocation>
</comment>
<comment type="similarity">
    <text evidence="3">Belongs to the adenylate kinase family.</text>
</comment>
<comment type="sequence caution" evidence="3">
    <conflict type="erroneous gene model prediction">
        <sequence resource="EMBL-CDS" id="BAF16131"/>
    </conflict>
</comment>
<gene>
    <name type="ordered locus">Os04g0671100</name>
    <name type="ordered locus">LOC_Os04g57540</name>
    <name type="ORF">OSJNBa0043A12.38</name>
</gene>
<protein>
    <recommendedName>
        <fullName>Probable adenylate kinase 6, chloroplastic</fullName>
        <ecNumber>2.7.4.3</ecNumber>
    </recommendedName>
    <alternativeName>
        <fullName>Adenylate monophosphate kinase 6</fullName>
    </alternativeName>
</protein>
<accession>Q7XR47</accession>
<accession>Q0J956</accession>